<keyword id="KW-0963">Cytoplasm</keyword>
<keyword id="KW-0238">DNA-binding</keyword>
<keyword id="KW-1185">Reference proteome</keyword>
<comment type="function">
    <text evidence="1">Binds to DNA and alters its conformation. May be involved in regulation of gene expression, nucleoid organization and DNA protection.</text>
</comment>
<comment type="subunit">
    <text evidence="1">Homodimer.</text>
</comment>
<comment type="subcellular location">
    <subcellularLocation>
        <location evidence="1">Cytoplasm</location>
        <location evidence="1">Nucleoid</location>
    </subcellularLocation>
</comment>
<comment type="similarity">
    <text evidence="1">Belongs to the YbaB/EbfC family.</text>
</comment>
<gene>
    <name type="ordered locus">PMT_0025</name>
</gene>
<accession>Q7V9C5</accession>
<dbReference type="EMBL" id="BX548175">
    <property type="protein sequence ID" value="CAE20200.1"/>
    <property type="molecule type" value="Genomic_DNA"/>
</dbReference>
<dbReference type="RefSeq" id="WP_011129404.1">
    <property type="nucleotide sequence ID" value="NC_005071.1"/>
</dbReference>
<dbReference type="SMR" id="Q7V9C5"/>
<dbReference type="KEGG" id="pmt:PMT_0025"/>
<dbReference type="eggNOG" id="COG0718">
    <property type="taxonomic scope" value="Bacteria"/>
</dbReference>
<dbReference type="HOGENOM" id="CLU_140930_0_1_3"/>
<dbReference type="OrthoDB" id="487780at2"/>
<dbReference type="Proteomes" id="UP000001423">
    <property type="component" value="Chromosome"/>
</dbReference>
<dbReference type="GO" id="GO:0043590">
    <property type="term" value="C:bacterial nucleoid"/>
    <property type="evidence" value="ECO:0007669"/>
    <property type="project" value="UniProtKB-UniRule"/>
</dbReference>
<dbReference type="GO" id="GO:0005829">
    <property type="term" value="C:cytosol"/>
    <property type="evidence" value="ECO:0007669"/>
    <property type="project" value="TreeGrafter"/>
</dbReference>
<dbReference type="GO" id="GO:0003677">
    <property type="term" value="F:DNA binding"/>
    <property type="evidence" value="ECO:0007669"/>
    <property type="project" value="UniProtKB-UniRule"/>
</dbReference>
<dbReference type="Gene3D" id="3.30.1310.10">
    <property type="entry name" value="Nucleoid-associated protein YbaB-like domain"/>
    <property type="match status" value="1"/>
</dbReference>
<dbReference type="HAMAP" id="MF_00274">
    <property type="entry name" value="DNA_YbaB_EbfC"/>
    <property type="match status" value="1"/>
</dbReference>
<dbReference type="InterPro" id="IPR036894">
    <property type="entry name" value="YbaB-like_sf"/>
</dbReference>
<dbReference type="InterPro" id="IPR004401">
    <property type="entry name" value="YbaB/EbfC"/>
</dbReference>
<dbReference type="NCBIfam" id="TIGR00103">
    <property type="entry name" value="DNA_YbaB_EbfC"/>
    <property type="match status" value="1"/>
</dbReference>
<dbReference type="PANTHER" id="PTHR33449">
    <property type="entry name" value="NUCLEOID-ASSOCIATED PROTEIN YBAB"/>
    <property type="match status" value="1"/>
</dbReference>
<dbReference type="PANTHER" id="PTHR33449:SF1">
    <property type="entry name" value="NUCLEOID-ASSOCIATED PROTEIN YBAB"/>
    <property type="match status" value="1"/>
</dbReference>
<dbReference type="Pfam" id="PF02575">
    <property type="entry name" value="YbaB_DNA_bd"/>
    <property type="match status" value="1"/>
</dbReference>
<dbReference type="PIRSF" id="PIRSF004555">
    <property type="entry name" value="UCP004555"/>
    <property type="match status" value="1"/>
</dbReference>
<dbReference type="SUPFAM" id="SSF82607">
    <property type="entry name" value="YbaB-like"/>
    <property type="match status" value="1"/>
</dbReference>
<feature type="chain" id="PRO_0000170421" description="Nucleoid-associated protein PMT_0025">
    <location>
        <begin position="1"/>
        <end position="113"/>
    </location>
</feature>
<proteinExistence type="inferred from homology"/>
<name>Y025_PROMM</name>
<organism>
    <name type="scientific">Prochlorococcus marinus (strain MIT 9313)</name>
    <dbReference type="NCBI Taxonomy" id="74547"/>
    <lineage>
        <taxon>Bacteria</taxon>
        <taxon>Bacillati</taxon>
        <taxon>Cyanobacteriota</taxon>
        <taxon>Cyanophyceae</taxon>
        <taxon>Synechococcales</taxon>
        <taxon>Prochlorococcaceae</taxon>
        <taxon>Prochlorococcus</taxon>
    </lineage>
</organism>
<protein>
    <recommendedName>
        <fullName evidence="1">Nucleoid-associated protein PMT_0025</fullName>
    </recommendedName>
</protein>
<sequence length="113" mass="12292">MAGFGLPNFGQLTEAFRKAQQIQQNAQKLQEELDAMEIEGSSPDGRASIWLSGNQQPLRVRIEPSLLAEGQDASETAILAALQSAYEHSTTTMKEQMEELTGGLNLNLPGMSE</sequence>
<reference key="1">
    <citation type="journal article" date="2003" name="Nature">
        <title>Genome divergence in two Prochlorococcus ecotypes reflects oceanic niche differentiation.</title>
        <authorList>
            <person name="Rocap G."/>
            <person name="Larimer F.W."/>
            <person name="Lamerdin J.E."/>
            <person name="Malfatti S."/>
            <person name="Chain P."/>
            <person name="Ahlgren N.A."/>
            <person name="Arellano A."/>
            <person name="Coleman M."/>
            <person name="Hauser L."/>
            <person name="Hess W.R."/>
            <person name="Johnson Z.I."/>
            <person name="Land M.L."/>
            <person name="Lindell D."/>
            <person name="Post A.F."/>
            <person name="Regala W."/>
            <person name="Shah M."/>
            <person name="Shaw S.L."/>
            <person name="Steglich C."/>
            <person name="Sullivan M.B."/>
            <person name="Ting C.S."/>
            <person name="Tolonen A."/>
            <person name="Webb E.A."/>
            <person name="Zinser E.R."/>
            <person name="Chisholm S.W."/>
        </authorList>
    </citation>
    <scope>NUCLEOTIDE SEQUENCE [LARGE SCALE GENOMIC DNA]</scope>
    <source>
        <strain>MIT 9313</strain>
    </source>
</reference>
<evidence type="ECO:0000255" key="1">
    <source>
        <dbReference type="HAMAP-Rule" id="MF_00274"/>
    </source>
</evidence>